<accession>P43225</accession>
<name>RBL_ARTBA</name>
<gene>
    <name type="primary">rbcL</name>
</gene>
<evidence type="ECO:0000250" key="1"/>
<evidence type="ECO:0000255" key="2">
    <source>
        <dbReference type="PROSITE-ProRule" id="PRU10114"/>
    </source>
</evidence>
<evidence type="ECO:0000305" key="3"/>
<reference key="1">
    <citation type="journal article" date="1994" name="Proc. Natl. Acad. Sci. U.S.A.">
        <title>rbcL gene sequences provide evidence for the evolutionary lineages of leptosporangiate ferns.</title>
        <authorList>
            <person name="Hasebe M."/>
            <person name="Omori T."/>
            <person name="Nakazawa M."/>
            <person name="Sano T."/>
            <person name="Kato M."/>
            <person name="Iwatsuki K."/>
        </authorList>
    </citation>
    <scope>NUCLEOTIDE SEQUENCE [GENOMIC DNA]</scope>
    <source>
        <tissue>Leaf</tissue>
    </source>
</reference>
<organism>
    <name type="scientific">Arthropteris beckleri</name>
    <name type="common">Fern</name>
    <name type="synonym">Polypodium beckleri</name>
    <dbReference type="NCBI Taxonomy" id="29631"/>
    <lineage>
        <taxon>Eukaryota</taxon>
        <taxon>Viridiplantae</taxon>
        <taxon>Streptophyta</taxon>
        <taxon>Embryophyta</taxon>
        <taxon>Tracheophyta</taxon>
        <taxon>Polypodiopsida</taxon>
        <taxon>Polypodiidae</taxon>
        <taxon>Polypodiales</taxon>
        <taxon>Polypodiineae</taxon>
        <taxon>Tectariaceae</taxon>
        <taxon>Arthropteris</taxon>
    </lineage>
</organism>
<proteinExistence type="inferred from homology"/>
<feature type="chain" id="PRO_0000062362" description="Ribulose bisphosphate carboxylase large chain">
    <location>
        <begin position="1" status="less than"/>
        <end position="416" status="greater than"/>
    </location>
</feature>
<feature type="active site" description="Proton acceptor" evidence="1">
    <location>
        <position position="154"/>
    </location>
</feature>
<feature type="active site" description="Proton acceptor" evidence="1">
    <location>
        <position position="273"/>
    </location>
</feature>
<feature type="binding site" description="in homodimeric partner" evidence="1">
    <location>
        <position position="102"/>
    </location>
    <ligand>
        <name>substrate</name>
    </ligand>
</feature>
<feature type="binding site" evidence="1">
    <location>
        <position position="152"/>
    </location>
    <ligand>
        <name>substrate</name>
    </ligand>
</feature>
<feature type="binding site" evidence="1">
    <location>
        <position position="156"/>
    </location>
    <ligand>
        <name>substrate</name>
    </ligand>
</feature>
<feature type="binding site" description="via carbamate group" evidence="2">
    <location>
        <position position="180"/>
    </location>
    <ligand>
        <name>Mg(2+)</name>
        <dbReference type="ChEBI" id="CHEBI:18420"/>
    </ligand>
</feature>
<feature type="binding site" evidence="2">
    <location>
        <position position="182"/>
    </location>
    <ligand>
        <name>Mg(2+)</name>
        <dbReference type="ChEBI" id="CHEBI:18420"/>
    </ligand>
</feature>
<feature type="binding site" evidence="2">
    <location>
        <position position="183"/>
    </location>
    <ligand>
        <name>Mg(2+)</name>
        <dbReference type="ChEBI" id="CHEBI:18420"/>
    </ligand>
</feature>
<feature type="binding site" evidence="1">
    <location>
        <position position="274"/>
    </location>
    <ligand>
        <name>substrate</name>
    </ligand>
</feature>
<feature type="binding site" evidence="1">
    <location>
        <position position="306"/>
    </location>
    <ligand>
        <name>substrate</name>
    </ligand>
</feature>
<feature type="binding site" evidence="1">
    <location>
        <position position="358"/>
    </location>
    <ligand>
        <name>substrate</name>
    </ligand>
</feature>
<feature type="site" description="Transition state stabilizer" evidence="1">
    <location>
        <position position="313"/>
    </location>
</feature>
<feature type="modified residue" description="N6-carboxylysine" evidence="2">
    <location>
        <position position="180"/>
    </location>
</feature>
<feature type="disulfide bond" description="Interchain; in linked form" evidence="1">
    <location>
        <position position="226"/>
    </location>
</feature>
<feature type="non-terminal residue">
    <location>
        <position position="1"/>
    </location>
</feature>
<feature type="non-terminal residue">
    <location>
        <position position="416"/>
    </location>
</feature>
<protein>
    <recommendedName>
        <fullName>Ribulose bisphosphate carboxylase large chain</fullName>
        <shortName>RuBisCO large subunit</shortName>
        <ecNumber>4.1.1.39</ecNumber>
    </recommendedName>
</protein>
<sequence>LTYYTPDYQTKDTDILAAFRMTPQPGVPAEEAGAAVAAESSTGTWTTVWTDGLTSLDRYKGRCYDIEPVAGEENQYIAYVAYPLDLFEEGSVTNLFTSIVGNVFGFKALRALRLEDLRIPPAYSKTFIGPPHGIQVERDKLTKYGRPLLGCTIKPKLGLSAKNYGRAVYECLRGGLDFTKDDENVNSQPFMRWRDRFLSVAEALFKAQAETGEIKGHYLNATAGTCEEMMKRAIFARELGAPIVMHDYLTGGFTANTSLAYYCRDNGLLLHIHRAMHAVIDRQRNHGMHFRVLAKALRMSGGDHVHAGTVVGKLEGERDVTLGFVDLLRDDYIEKDRSRGVYFTQDWVSMPGVIPVASGGIHVWHMPALTEIFGDDSVLQFGGGTLGHPWGNAPGAVANRVALEACVQARNEGRDL</sequence>
<geneLocation type="chloroplast"/>
<dbReference type="EC" id="4.1.1.39"/>
<dbReference type="EMBL" id="U05605">
    <property type="protein sequence ID" value="AAA19889.1"/>
    <property type="molecule type" value="Genomic_DNA"/>
</dbReference>
<dbReference type="SMR" id="P43225"/>
<dbReference type="GO" id="GO:0009507">
    <property type="term" value="C:chloroplast"/>
    <property type="evidence" value="ECO:0007669"/>
    <property type="project" value="UniProtKB-SubCell"/>
</dbReference>
<dbReference type="GO" id="GO:0000287">
    <property type="term" value="F:magnesium ion binding"/>
    <property type="evidence" value="ECO:0007669"/>
    <property type="project" value="InterPro"/>
</dbReference>
<dbReference type="GO" id="GO:0004497">
    <property type="term" value="F:monooxygenase activity"/>
    <property type="evidence" value="ECO:0007669"/>
    <property type="project" value="UniProtKB-KW"/>
</dbReference>
<dbReference type="GO" id="GO:0016984">
    <property type="term" value="F:ribulose-bisphosphate carboxylase activity"/>
    <property type="evidence" value="ECO:0007669"/>
    <property type="project" value="UniProtKB-EC"/>
</dbReference>
<dbReference type="GO" id="GO:0009853">
    <property type="term" value="P:photorespiration"/>
    <property type="evidence" value="ECO:0007669"/>
    <property type="project" value="UniProtKB-KW"/>
</dbReference>
<dbReference type="GO" id="GO:0019253">
    <property type="term" value="P:reductive pentose-phosphate cycle"/>
    <property type="evidence" value="ECO:0007669"/>
    <property type="project" value="UniProtKB-KW"/>
</dbReference>
<dbReference type="Gene3D" id="3.20.20.110">
    <property type="entry name" value="Ribulose bisphosphate carboxylase, large subunit, C-terminal domain"/>
    <property type="match status" value="1"/>
</dbReference>
<dbReference type="Gene3D" id="3.30.70.150">
    <property type="entry name" value="RuBisCO large subunit, N-terminal domain"/>
    <property type="match status" value="1"/>
</dbReference>
<dbReference type="InterPro" id="IPR033966">
    <property type="entry name" value="RuBisCO"/>
</dbReference>
<dbReference type="InterPro" id="IPR020878">
    <property type="entry name" value="RuBisCo_large_chain_AS"/>
</dbReference>
<dbReference type="InterPro" id="IPR000685">
    <property type="entry name" value="RuBisCO_lsu_C"/>
</dbReference>
<dbReference type="InterPro" id="IPR036376">
    <property type="entry name" value="RuBisCO_lsu_C_sf"/>
</dbReference>
<dbReference type="InterPro" id="IPR017443">
    <property type="entry name" value="RuBisCO_lsu_fd_N"/>
</dbReference>
<dbReference type="InterPro" id="IPR036422">
    <property type="entry name" value="RuBisCO_lsu_N_sf"/>
</dbReference>
<dbReference type="NCBIfam" id="NF003252">
    <property type="entry name" value="PRK04208.1"/>
    <property type="match status" value="1"/>
</dbReference>
<dbReference type="PANTHER" id="PTHR42704">
    <property type="entry name" value="RIBULOSE BISPHOSPHATE CARBOXYLASE"/>
    <property type="match status" value="1"/>
</dbReference>
<dbReference type="PANTHER" id="PTHR42704:SF17">
    <property type="entry name" value="RIBULOSE BISPHOSPHATE CARBOXYLASE LARGE CHAIN"/>
    <property type="match status" value="1"/>
</dbReference>
<dbReference type="Pfam" id="PF00016">
    <property type="entry name" value="RuBisCO_large"/>
    <property type="match status" value="1"/>
</dbReference>
<dbReference type="Pfam" id="PF02788">
    <property type="entry name" value="RuBisCO_large_N"/>
    <property type="match status" value="1"/>
</dbReference>
<dbReference type="SFLD" id="SFLDG01052">
    <property type="entry name" value="RuBisCO"/>
    <property type="match status" value="1"/>
</dbReference>
<dbReference type="SFLD" id="SFLDS00014">
    <property type="entry name" value="RuBisCO"/>
    <property type="match status" value="1"/>
</dbReference>
<dbReference type="SFLD" id="SFLDG00301">
    <property type="entry name" value="RuBisCO-like_proteins"/>
    <property type="match status" value="1"/>
</dbReference>
<dbReference type="SUPFAM" id="SSF51649">
    <property type="entry name" value="RuBisCo, C-terminal domain"/>
    <property type="match status" value="1"/>
</dbReference>
<dbReference type="SUPFAM" id="SSF54966">
    <property type="entry name" value="RuBisCO, large subunit, small (N-terminal) domain"/>
    <property type="match status" value="1"/>
</dbReference>
<dbReference type="PROSITE" id="PS00157">
    <property type="entry name" value="RUBISCO_LARGE"/>
    <property type="match status" value="1"/>
</dbReference>
<keyword id="KW-0113">Calvin cycle</keyword>
<keyword id="KW-0120">Carbon dioxide fixation</keyword>
<keyword id="KW-0150">Chloroplast</keyword>
<keyword id="KW-1015">Disulfide bond</keyword>
<keyword id="KW-0456">Lyase</keyword>
<keyword id="KW-0460">Magnesium</keyword>
<keyword id="KW-0479">Metal-binding</keyword>
<keyword id="KW-0503">Monooxygenase</keyword>
<keyword id="KW-0560">Oxidoreductase</keyword>
<keyword id="KW-0601">Photorespiration</keyword>
<keyword id="KW-0602">Photosynthesis</keyword>
<keyword id="KW-0934">Plastid</keyword>
<comment type="function">
    <text evidence="1">RuBisCO catalyzes two reactions: the carboxylation of D-ribulose 1,5-bisphosphate, the primary event in carbon dioxide fixation, as well as the oxidative fragmentation of the pentose substrate in the photorespiration process. Both reactions occur simultaneously and in competition at the same active site (By similarity).</text>
</comment>
<comment type="catalytic activity">
    <reaction>
        <text>2 (2R)-3-phosphoglycerate + 2 H(+) = D-ribulose 1,5-bisphosphate + CO2 + H2O</text>
        <dbReference type="Rhea" id="RHEA:23124"/>
        <dbReference type="ChEBI" id="CHEBI:15377"/>
        <dbReference type="ChEBI" id="CHEBI:15378"/>
        <dbReference type="ChEBI" id="CHEBI:16526"/>
        <dbReference type="ChEBI" id="CHEBI:57870"/>
        <dbReference type="ChEBI" id="CHEBI:58272"/>
        <dbReference type="EC" id="4.1.1.39"/>
    </reaction>
</comment>
<comment type="catalytic activity">
    <reaction>
        <text>D-ribulose 1,5-bisphosphate + O2 = 2-phosphoglycolate + (2R)-3-phosphoglycerate + 2 H(+)</text>
        <dbReference type="Rhea" id="RHEA:36631"/>
        <dbReference type="ChEBI" id="CHEBI:15378"/>
        <dbReference type="ChEBI" id="CHEBI:15379"/>
        <dbReference type="ChEBI" id="CHEBI:57870"/>
        <dbReference type="ChEBI" id="CHEBI:58033"/>
        <dbReference type="ChEBI" id="CHEBI:58272"/>
    </reaction>
</comment>
<comment type="cofactor">
    <cofactor evidence="1">
        <name>Mg(2+)</name>
        <dbReference type="ChEBI" id="CHEBI:18420"/>
    </cofactor>
    <text evidence="1">Binds 1 Mg(2+) ion per subunit.</text>
</comment>
<comment type="subunit">
    <text evidence="1">Heterohexadecamer of 8 large chains and 8 small chains; disulfide-linked. The disulfide link is formed within the large subunit homodimers (By similarity).</text>
</comment>
<comment type="subcellular location">
    <subcellularLocation>
        <location>Plastid</location>
        <location>Chloroplast</location>
    </subcellularLocation>
</comment>
<comment type="PTM">
    <text evidence="1">The disulfide bond which can form in the large chain dimeric partners within the hexadecamer appears to be associated with oxidative stress and protein turnover.</text>
</comment>
<comment type="miscellaneous">
    <text evidence="1">The basic functional RuBisCO is composed of a large chain homodimer in a 'head-to-tail' conformation. In form I RuBisCO this homodimer is arranged in a barrel-like tetramer with the small subunits forming a tetrameric 'cap' on each end of the 'barrel' (By similarity).</text>
</comment>
<comment type="similarity">
    <text evidence="3">Belongs to the RuBisCO large chain family. Type I subfamily.</text>
</comment>